<dbReference type="EC" id="2.7.7.6" evidence="1"/>
<dbReference type="EMBL" id="CR767821">
    <property type="protein sequence ID" value="CAH58016.1"/>
    <property type="molecule type" value="Genomic_DNA"/>
</dbReference>
<dbReference type="EMBL" id="CR925678">
    <property type="protein sequence ID" value="CAI26799.1"/>
    <property type="molecule type" value="Genomic_DNA"/>
</dbReference>
<dbReference type="RefSeq" id="WP_011154981.1">
    <property type="nucleotide sequence ID" value="NC_005295.2"/>
</dbReference>
<dbReference type="SMR" id="Q5HBN0"/>
<dbReference type="GeneID" id="33057590"/>
<dbReference type="KEGG" id="eru:Erum2990"/>
<dbReference type="KEGG" id="erw:ERWE_CDS_03050"/>
<dbReference type="eggNOG" id="COG1758">
    <property type="taxonomic scope" value="Bacteria"/>
</dbReference>
<dbReference type="HOGENOM" id="CLU_125406_2_1_5"/>
<dbReference type="Proteomes" id="UP000001021">
    <property type="component" value="Chromosome"/>
</dbReference>
<dbReference type="GO" id="GO:0000428">
    <property type="term" value="C:DNA-directed RNA polymerase complex"/>
    <property type="evidence" value="ECO:0007669"/>
    <property type="project" value="UniProtKB-KW"/>
</dbReference>
<dbReference type="GO" id="GO:0003677">
    <property type="term" value="F:DNA binding"/>
    <property type="evidence" value="ECO:0007669"/>
    <property type="project" value="UniProtKB-UniRule"/>
</dbReference>
<dbReference type="GO" id="GO:0003899">
    <property type="term" value="F:DNA-directed RNA polymerase activity"/>
    <property type="evidence" value="ECO:0007669"/>
    <property type="project" value="UniProtKB-UniRule"/>
</dbReference>
<dbReference type="GO" id="GO:0006351">
    <property type="term" value="P:DNA-templated transcription"/>
    <property type="evidence" value="ECO:0007669"/>
    <property type="project" value="UniProtKB-UniRule"/>
</dbReference>
<dbReference type="Gene3D" id="3.90.940.10">
    <property type="match status" value="1"/>
</dbReference>
<dbReference type="HAMAP" id="MF_00366">
    <property type="entry name" value="RNApol_bact_RpoZ"/>
    <property type="match status" value="1"/>
</dbReference>
<dbReference type="InterPro" id="IPR003716">
    <property type="entry name" value="DNA-dir_RNA_pol_omega"/>
</dbReference>
<dbReference type="InterPro" id="IPR006110">
    <property type="entry name" value="Pol_omega/Rpo6/RPB6"/>
</dbReference>
<dbReference type="InterPro" id="IPR036161">
    <property type="entry name" value="RPB6/omega-like_sf"/>
</dbReference>
<dbReference type="NCBIfam" id="TIGR00690">
    <property type="entry name" value="rpoZ"/>
    <property type="match status" value="1"/>
</dbReference>
<dbReference type="PANTHER" id="PTHR34476">
    <property type="entry name" value="DNA-DIRECTED RNA POLYMERASE SUBUNIT OMEGA"/>
    <property type="match status" value="1"/>
</dbReference>
<dbReference type="PANTHER" id="PTHR34476:SF1">
    <property type="entry name" value="DNA-DIRECTED RNA POLYMERASE SUBUNIT OMEGA"/>
    <property type="match status" value="1"/>
</dbReference>
<dbReference type="Pfam" id="PF01192">
    <property type="entry name" value="RNA_pol_Rpb6"/>
    <property type="match status" value="1"/>
</dbReference>
<dbReference type="SMART" id="SM01409">
    <property type="entry name" value="RNA_pol_Rpb6"/>
    <property type="match status" value="1"/>
</dbReference>
<dbReference type="SUPFAM" id="SSF63562">
    <property type="entry name" value="RPB6/omega subunit-like"/>
    <property type="match status" value="1"/>
</dbReference>
<organism>
    <name type="scientific">Ehrlichia ruminantium (strain Welgevonden)</name>
    <dbReference type="NCBI Taxonomy" id="254945"/>
    <lineage>
        <taxon>Bacteria</taxon>
        <taxon>Pseudomonadati</taxon>
        <taxon>Pseudomonadota</taxon>
        <taxon>Alphaproteobacteria</taxon>
        <taxon>Rickettsiales</taxon>
        <taxon>Anaplasmataceae</taxon>
        <taxon>Ehrlichia</taxon>
    </lineage>
</organism>
<comment type="function">
    <text evidence="1">Promotes RNA polymerase assembly. Latches the N- and C-terminal regions of the beta' subunit thereby facilitating its interaction with the beta and alpha subunits.</text>
</comment>
<comment type="catalytic activity">
    <reaction evidence="1">
        <text>RNA(n) + a ribonucleoside 5'-triphosphate = RNA(n+1) + diphosphate</text>
        <dbReference type="Rhea" id="RHEA:21248"/>
        <dbReference type="Rhea" id="RHEA-COMP:14527"/>
        <dbReference type="Rhea" id="RHEA-COMP:17342"/>
        <dbReference type="ChEBI" id="CHEBI:33019"/>
        <dbReference type="ChEBI" id="CHEBI:61557"/>
        <dbReference type="ChEBI" id="CHEBI:140395"/>
        <dbReference type="EC" id="2.7.7.6"/>
    </reaction>
</comment>
<comment type="subunit">
    <text evidence="1">The RNAP catalytic core consists of 2 alpha, 1 beta, 1 beta' and 1 omega subunit. When a sigma factor is associated with the core the holoenzyme is formed, which can initiate transcription.</text>
</comment>
<comment type="similarity">
    <text evidence="1">Belongs to the RNA polymerase subunit omega family.</text>
</comment>
<proteinExistence type="inferred from homology"/>
<protein>
    <recommendedName>
        <fullName evidence="1">DNA-directed RNA polymerase subunit omega</fullName>
        <shortName evidence="1">RNAP omega subunit</shortName>
        <ecNumber evidence="1">2.7.7.6</ecNumber>
    </recommendedName>
    <alternativeName>
        <fullName evidence="1">RNA polymerase omega subunit</fullName>
    </alternativeName>
    <alternativeName>
        <fullName evidence="1">Transcriptase subunit omega</fullName>
    </alternativeName>
</protein>
<gene>
    <name evidence="1" type="primary">rpoZ</name>
    <name type="ordered locus">Erum2990</name>
    <name type="ordered locus">ERWE_CDS_03050</name>
</gene>
<reference key="1">
    <citation type="journal article" date="2005" name="Proc. Natl. Acad. Sci. U.S.A.">
        <title>The genome of the heartwater agent Ehrlichia ruminantium contains multiple tandem repeats of actively variable copy number.</title>
        <authorList>
            <person name="Collins N.E."/>
            <person name="Liebenberg J."/>
            <person name="de Villiers E.P."/>
            <person name="Brayton K.A."/>
            <person name="Louw E."/>
            <person name="Pretorius A."/>
            <person name="Faber F.E."/>
            <person name="van Heerden H."/>
            <person name="Josemans A."/>
            <person name="van Kleef M."/>
            <person name="Steyn H.C."/>
            <person name="van Strijp M.F."/>
            <person name="Zweygarth E."/>
            <person name="Jongejan F."/>
            <person name="Maillard J.C."/>
            <person name="Berthier D."/>
            <person name="Botha M."/>
            <person name="Joubert F."/>
            <person name="Corton C.H."/>
            <person name="Thomson N.R."/>
            <person name="Allsopp M.T."/>
            <person name="Allsopp B.A."/>
        </authorList>
    </citation>
    <scope>NUCLEOTIDE SEQUENCE [LARGE SCALE GENOMIC DNA]</scope>
    <source>
        <strain>Welgevonden</strain>
    </source>
</reference>
<reference key="2">
    <citation type="journal article" date="2006" name="J. Bacteriol.">
        <title>Comparative genomic analysis of three strains of Ehrlichia ruminantium reveals an active process of genome size plasticity.</title>
        <authorList>
            <person name="Frutos R."/>
            <person name="Viari A."/>
            <person name="Ferraz C."/>
            <person name="Morgat A."/>
            <person name="Eychenie S."/>
            <person name="Kandassamy Y."/>
            <person name="Chantal I."/>
            <person name="Bensaid A."/>
            <person name="Coissac E."/>
            <person name="Vachiery N."/>
            <person name="Demaille J."/>
            <person name="Martinez D."/>
        </authorList>
    </citation>
    <scope>NUCLEOTIDE SEQUENCE [LARGE SCALE GENOMIC DNA]</scope>
    <source>
        <strain>Welgevonden</strain>
    </source>
</reference>
<evidence type="ECO:0000255" key="1">
    <source>
        <dbReference type="HAMAP-Rule" id="MF_00366"/>
    </source>
</evidence>
<keyword id="KW-0240">DNA-directed RNA polymerase</keyword>
<keyword id="KW-0548">Nucleotidyltransferase</keyword>
<keyword id="KW-0804">Transcription</keyword>
<keyword id="KW-0808">Transferase</keyword>
<feature type="chain" id="PRO_0000237457" description="DNA-directed RNA polymerase subunit omega">
    <location>
        <begin position="1"/>
        <end position="132"/>
    </location>
</feature>
<sequence>MARLTVEECMGRTNNKFKLVILASQRAHDLNSGASPVVKHKNSKNTIIALTEIANEQLDVHLLFNLAVQRCRKYMEKFINSDDSYVVHKSKDNIDIFQKNATSNFDELGANSLNVENSKFLDGDNFFLTQKE</sequence>
<accession>Q5HBN0</accession>
<accession>Q5FE74</accession>
<name>RPOZ_EHRRW</name>